<sequence>MLDINALKEIPPATAVGAAVAVGALYFFCQCFYNLYLHPLRKIPGPKLAAIGPYLEFYHEVLRDGQYLWEIEKMHQKYGPIVRVNAREVHVKDTSYYNTIYTAGARKTNKDPATVGAFDVPTATAATVDHDLHRARRGYLNPYFSKRAVAGLEPTIHERITKLLSRFDQHRKDDQVLSLDGAFSALTADVITARFYGEHKDYLDVPDFHFVVRDGFQGLSRVYHLGRFLPSVVGALKGLPKFLIRIIFPPIAELLTMREEIEAGGIDEFTKSKSSGIKSSVLVGALSDPHIPPQERTVARMLDEGTVFLFAGTETTSRTLGITMFYLLSNPDILNKLREELKSLPPSDDNMHSLGQLENLPYLTGVVHEGLRLSFGPISRSSRVATHEALQYKEHTIPAGTPVSQSTYFVHTDTEIFPDPWEFKPERWIKAAEDGVALKKYITNFSQGSRQCIGYSMSFAEMFLTLSRIIPAFDLELYDTTKADIDMTHARIVGYPKKVPGKTESLGELRVKVIKKL</sequence>
<keyword id="KW-0325">Glycoprotein</keyword>
<keyword id="KW-0349">Heme</keyword>
<keyword id="KW-0408">Iron</keyword>
<keyword id="KW-0472">Membrane</keyword>
<keyword id="KW-0479">Metal-binding</keyword>
<keyword id="KW-0503">Monooxygenase</keyword>
<keyword id="KW-0560">Oxidoreductase</keyword>
<keyword id="KW-0812">Transmembrane</keyword>
<keyword id="KW-1133">Transmembrane helix</keyword>
<reference key="1">
    <citation type="journal article" date="2011" name="Appl. Environ. Microbiol.">
        <title>Identification of loci and functional characterization of trichothecene biosynthesis genes in filamentous fungi of the genus Trichoderma.</title>
        <authorList>
            <person name="Cardoza R.E."/>
            <person name="Malmierca M.G."/>
            <person name="Hermosa M.R."/>
            <person name="Alexander N.J."/>
            <person name="McCormick S.P."/>
            <person name="Proctor R.H."/>
            <person name="Tijerino A.M."/>
            <person name="Rumbero A."/>
            <person name="Monte E."/>
            <person name="Gutierrez S."/>
        </authorList>
    </citation>
    <scope>NUCLEOTIDE SEQUENCE [GENOMIC DNA]</scope>
    <scope>IDENTIFICATION</scope>
    <scope>FUNCTION</scope>
    <scope>CATALYTIC ACTIVITY</scope>
    <scope>PATHWAY</scope>
    <source>
        <strain>IBT 40837</strain>
    </source>
</reference>
<reference key="2">
    <citation type="journal article" date="2018" name="Fungal Genet. Biol.">
        <title>Effect of deletion of a trichothecene toxin regulatory gene on the secondary metabolism transcriptome of the saprotrophic fungus Trichoderma arundinaceum.</title>
        <authorList>
            <person name="Lindo L."/>
            <person name="McCormick S.P."/>
            <person name="Cardoza R.E."/>
            <person name="Brown D.W."/>
            <person name="Kim H.S."/>
            <person name="Alexander N.J."/>
            <person name="Proctor R.H."/>
            <person name="Gutierrez S."/>
        </authorList>
    </citation>
    <scope>FUNCTION</scope>
    <scope>INDUCTION</scope>
</reference>
<reference key="3">
    <citation type="journal article" date="2018" name="Org. Biomol. Chem.">
        <title>Relevance of the deletion of the Tatri4 gene in the secondary metabolome of Trichoderma arundinaceum.</title>
        <authorList>
            <person name="Izquierdo-Bueno I."/>
            <person name="Moraga J."/>
            <person name="Cardoza R.E."/>
            <person name="Lindo L."/>
            <person name="Hanson J.R."/>
            <person name="Gutierrez S."/>
            <person name="Collado I.G."/>
        </authorList>
    </citation>
    <scope>FUNCTION</scope>
    <scope>DISRUPTION PHENOTYPE</scope>
</reference>
<evidence type="ECO:0000250" key="1">
    <source>
        <dbReference type="UniProtKB" id="P04798"/>
    </source>
</evidence>
<evidence type="ECO:0000255" key="2"/>
<evidence type="ECO:0000255" key="3">
    <source>
        <dbReference type="PROSITE-ProRule" id="PRU00498"/>
    </source>
</evidence>
<evidence type="ECO:0000269" key="4">
    <source>
    </source>
</evidence>
<evidence type="ECO:0000269" key="5">
    <source>
    </source>
</evidence>
<evidence type="ECO:0000269" key="6">
    <source>
    </source>
</evidence>
<evidence type="ECO:0000303" key="7">
    <source>
    </source>
</evidence>
<evidence type="ECO:0000305" key="8"/>
<evidence type="ECO:0000305" key="9">
    <source>
    </source>
</evidence>
<evidence type="ECO:0000305" key="10">
    <source>
    </source>
</evidence>
<feature type="chain" id="PRO_0000445609" description="Cytochrome P450 monooxygenase TRI4">
    <location>
        <begin position="1"/>
        <end position="517"/>
    </location>
</feature>
<feature type="transmembrane region" description="Helical" evidence="2">
    <location>
        <begin position="15"/>
        <end position="37"/>
    </location>
</feature>
<feature type="binding site" description="axial binding residue" evidence="1">
    <location>
        <position position="452"/>
    </location>
    <ligand>
        <name>heme</name>
        <dbReference type="ChEBI" id="CHEBI:30413"/>
    </ligand>
    <ligandPart>
        <name>Fe</name>
        <dbReference type="ChEBI" id="CHEBI:18248"/>
    </ligandPart>
</feature>
<feature type="glycosylation site" description="N-linked (GlcNAc...) asparagine" evidence="3">
    <location>
        <position position="444"/>
    </location>
</feature>
<gene>
    <name evidence="7" type="primary">TRI4</name>
</gene>
<comment type="function">
    <text evidence="4 5 9 10">Cytochrome P450 monooxygenase; part of the gene cluster that mediates the production of the antimicrobial trichothecene harzianum A (HA) that plays a role in Botrytis cinerea antagonistic activity and plant defense priming (PubMed:21642405, PubMed:29623313). The biosynthesis of harzianum A begins with the cyclization of farnesyl diphosphate to trichodiene and is catalyzed by the trichodiene synthase TRI5 (PubMed:21642405). Trichodiene undergoes a series of oxygenations catalyzed by the cytochrome P450 monooxygenase TRI4. TRI4 controls the addition of 3 oxygens at C-2, C-11, and the C-12, C-13-epoxide to form the intermediate isotrichodiol (PubMed:21642405). Isotrichodiol then undergoes a non-enzymatic isomerization and cyclization to form 12,13-epoxytrichothec-9-ene (EPT) which is further converted to trichodermol by the cytochrome P450 monooxygenase TRI11 via C-4 hydroxylation (PubMed:21642405). The last step of HA synthesis is esterification of an octatriendioyl moiety to the C-4 oxygen of trichodermol. The octatriendioyl moiety is probably produced by the polyketide synthase TRI17 and the esterification performed by the trichothecene O-acetyltransferase TRI3 (Probable).</text>
</comment>
<comment type="cofactor">
    <cofactor evidence="1">
        <name>heme</name>
        <dbReference type="ChEBI" id="CHEBI:30413"/>
    </cofactor>
</comment>
<comment type="pathway">
    <text evidence="4">Sesquiterpene biosynthesis; trichothecene biosynthesis.</text>
</comment>
<comment type="subcellular location">
    <subcellularLocation>
        <location evidence="2">Membrane</location>
        <topology evidence="2">Single-pass membrane protein</topology>
    </subcellularLocation>
</comment>
<comment type="induction">
    <text evidence="6">Expression is positively regulated by the cluster-specific transcription factor TRI6.</text>
</comment>
<comment type="disruption phenotype">
    <text evidence="5">Impairs the production of harzianum A and leads to the production of a larger quantity of the aspinolides B and C, as well as other secondary metabolites including additional aspinolides and their degradation products, gamma-lactones, and hemi-ketals.</text>
</comment>
<comment type="similarity">
    <text evidence="8">Belongs to the cytochrome P450 family.</text>
</comment>
<proteinExistence type="evidence at protein level"/>
<dbReference type="EC" id="1.-.-.-" evidence="4"/>
<dbReference type="EMBL" id="FN394496">
    <property type="protein sequence ID" value="CAY87362.1"/>
    <property type="molecule type" value="Genomic_DNA"/>
</dbReference>
<dbReference type="SMR" id="G0KYB2"/>
<dbReference type="GlyCosmos" id="G0KYB2">
    <property type="glycosylation" value="1 site, No reported glycans"/>
</dbReference>
<dbReference type="OrthoDB" id="3945418at2759"/>
<dbReference type="BioCyc" id="MetaCyc:MONOMER-19547"/>
<dbReference type="UniPathway" id="UPA00267"/>
<dbReference type="GO" id="GO:0016020">
    <property type="term" value="C:membrane"/>
    <property type="evidence" value="ECO:0007669"/>
    <property type="project" value="UniProtKB-SubCell"/>
</dbReference>
<dbReference type="GO" id="GO:0020037">
    <property type="term" value="F:heme binding"/>
    <property type="evidence" value="ECO:0007669"/>
    <property type="project" value="InterPro"/>
</dbReference>
<dbReference type="GO" id="GO:0005506">
    <property type="term" value="F:iron ion binding"/>
    <property type="evidence" value="ECO:0007669"/>
    <property type="project" value="InterPro"/>
</dbReference>
<dbReference type="GO" id="GO:0004497">
    <property type="term" value="F:monooxygenase activity"/>
    <property type="evidence" value="ECO:0007669"/>
    <property type="project" value="UniProtKB-KW"/>
</dbReference>
<dbReference type="GO" id="GO:0016705">
    <property type="term" value="F:oxidoreductase activity, acting on paired donors, with incorporation or reduction of molecular oxygen"/>
    <property type="evidence" value="ECO:0007669"/>
    <property type="project" value="InterPro"/>
</dbReference>
<dbReference type="CDD" id="cd11062">
    <property type="entry name" value="CYP58-like"/>
    <property type="match status" value="1"/>
</dbReference>
<dbReference type="Gene3D" id="1.10.630.10">
    <property type="entry name" value="Cytochrome P450"/>
    <property type="match status" value="1"/>
</dbReference>
<dbReference type="InterPro" id="IPR001128">
    <property type="entry name" value="Cyt_P450"/>
</dbReference>
<dbReference type="InterPro" id="IPR017972">
    <property type="entry name" value="Cyt_P450_CS"/>
</dbReference>
<dbReference type="InterPro" id="IPR002401">
    <property type="entry name" value="Cyt_P450_E_grp-I"/>
</dbReference>
<dbReference type="InterPro" id="IPR036396">
    <property type="entry name" value="Cyt_P450_sf"/>
</dbReference>
<dbReference type="InterPro" id="IPR050121">
    <property type="entry name" value="Cytochrome_P450_monoxygenase"/>
</dbReference>
<dbReference type="PANTHER" id="PTHR24305">
    <property type="entry name" value="CYTOCHROME P450"/>
    <property type="match status" value="1"/>
</dbReference>
<dbReference type="PANTHER" id="PTHR24305:SF157">
    <property type="entry name" value="N-ACETYLTRYPTOPHAN 6-HYDROXYLASE IVOC-RELATED"/>
    <property type="match status" value="1"/>
</dbReference>
<dbReference type="Pfam" id="PF00067">
    <property type="entry name" value="p450"/>
    <property type="match status" value="1"/>
</dbReference>
<dbReference type="PRINTS" id="PR00463">
    <property type="entry name" value="EP450I"/>
</dbReference>
<dbReference type="PRINTS" id="PR00385">
    <property type="entry name" value="P450"/>
</dbReference>
<dbReference type="SUPFAM" id="SSF48264">
    <property type="entry name" value="Cytochrome P450"/>
    <property type="match status" value="1"/>
</dbReference>
<dbReference type="PROSITE" id="PS00086">
    <property type="entry name" value="CYTOCHROME_P450"/>
    <property type="match status" value="1"/>
</dbReference>
<protein>
    <recommendedName>
        <fullName evidence="7">Cytochrome P450 monooxygenase TRI4</fullName>
        <ecNumber evidence="4">1.-.-.-</ecNumber>
    </recommendedName>
    <alternativeName>
        <fullName evidence="7">Trichothecene biosynthesis protein 4</fullName>
    </alternativeName>
</protein>
<name>TRI4_TRIAR</name>
<accession>G0KYB2</accession>
<organism>
    <name type="scientific">Trichoderma arundinaceum</name>
    <dbReference type="NCBI Taxonomy" id="490622"/>
    <lineage>
        <taxon>Eukaryota</taxon>
        <taxon>Fungi</taxon>
        <taxon>Dikarya</taxon>
        <taxon>Ascomycota</taxon>
        <taxon>Pezizomycotina</taxon>
        <taxon>Sordariomycetes</taxon>
        <taxon>Hypocreomycetidae</taxon>
        <taxon>Hypocreales</taxon>
        <taxon>Hypocreaceae</taxon>
        <taxon>Trichoderma</taxon>
    </lineage>
</organism>